<name>RRAB_AERHH</name>
<reference key="1">
    <citation type="journal article" date="2006" name="J. Bacteriol.">
        <title>Genome sequence of Aeromonas hydrophila ATCC 7966T: jack of all trades.</title>
        <authorList>
            <person name="Seshadri R."/>
            <person name="Joseph S.W."/>
            <person name="Chopra A.K."/>
            <person name="Sha J."/>
            <person name="Shaw J."/>
            <person name="Graf J."/>
            <person name="Haft D.H."/>
            <person name="Wu M."/>
            <person name="Ren Q."/>
            <person name="Rosovitz M.J."/>
            <person name="Madupu R."/>
            <person name="Tallon L."/>
            <person name="Kim M."/>
            <person name="Jin S."/>
            <person name="Vuong H."/>
            <person name="Stine O.C."/>
            <person name="Ali A."/>
            <person name="Horneman A.J."/>
            <person name="Heidelberg J.F."/>
        </authorList>
    </citation>
    <scope>NUCLEOTIDE SEQUENCE [LARGE SCALE GENOMIC DNA]</scope>
    <source>
        <strain>ATCC 7966 / DSM 30187 / BCRC 13018 / CCUG 14551 / JCM 1027 / KCTC 2358 / NCIMB 9240 / NCTC 8049</strain>
    </source>
</reference>
<gene>
    <name evidence="1" type="primary">rraB</name>
    <name type="ordered locus">AHA_3470</name>
</gene>
<organism>
    <name type="scientific">Aeromonas hydrophila subsp. hydrophila (strain ATCC 7966 / DSM 30187 / BCRC 13018 / CCUG 14551 / JCM 1027 / KCTC 2358 / NCIMB 9240 / NCTC 8049)</name>
    <dbReference type="NCBI Taxonomy" id="380703"/>
    <lineage>
        <taxon>Bacteria</taxon>
        <taxon>Pseudomonadati</taxon>
        <taxon>Pseudomonadota</taxon>
        <taxon>Gammaproteobacteria</taxon>
        <taxon>Aeromonadales</taxon>
        <taxon>Aeromonadaceae</taxon>
        <taxon>Aeromonas</taxon>
    </lineage>
</organism>
<feature type="chain" id="PRO_0000404302" description="Regulator of ribonuclease activity B">
    <location>
        <begin position="1"/>
        <end position="115"/>
    </location>
</feature>
<proteinExistence type="inferred from homology"/>
<sequence length="115" mass="13103">MSLDMQEWREETTAIVNELLADGSNPDLEYEIEHHFACQDFDLLEKAAVDLFKAGFEVTDAEEMELDDGATIFCFDATTECKLDIETIVADIAKMLPILEKYGVDYDGWGTYFQE</sequence>
<comment type="function">
    <text evidence="1">Globally modulates RNA abundance by binding to RNase E (Rne) and regulating its endonucleolytic activity. Can modulate Rne action in a substrate-dependent manner by altering the composition of the degradosome.</text>
</comment>
<comment type="subunit">
    <text evidence="1">Interacts with the C-terminal region of Rne.</text>
</comment>
<comment type="subcellular location">
    <subcellularLocation>
        <location evidence="1">Cytoplasm</location>
    </subcellularLocation>
</comment>
<comment type="similarity">
    <text evidence="1">Belongs to the RraB family.</text>
</comment>
<comment type="sequence caution" evidence="2">
    <conflict type="erroneous initiation">
        <sequence resource="EMBL-CDS" id="ABK38186"/>
    </conflict>
    <text>Extended N-terminus.</text>
</comment>
<protein>
    <recommendedName>
        <fullName evidence="1">Regulator of ribonuclease activity B</fullName>
    </recommendedName>
</protein>
<evidence type="ECO:0000255" key="1">
    <source>
        <dbReference type="HAMAP-Rule" id="MF_01888"/>
    </source>
</evidence>
<evidence type="ECO:0000305" key="2"/>
<accession>A0KNU5</accession>
<dbReference type="EMBL" id="CP000462">
    <property type="protein sequence ID" value="ABK38186.1"/>
    <property type="status" value="ALT_INIT"/>
    <property type="molecule type" value="Genomic_DNA"/>
</dbReference>
<dbReference type="RefSeq" id="WP_076360509.1">
    <property type="nucleotide sequence ID" value="NC_008570.1"/>
</dbReference>
<dbReference type="RefSeq" id="YP_857946.1">
    <property type="nucleotide sequence ID" value="NC_008570.1"/>
</dbReference>
<dbReference type="SMR" id="A0KNU5"/>
<dbReference type="STRING" id="380703.AHA_3470"/>
<dbReference type="EnsemblBacteria" id="ABK38186">
    <property type="protein sequence ID" value="ABK38186"/>
    <property type="gene ID" value="AHA_3470"/>
</dbReference>
<dbReference type="GeneID" id="4487805"/>
<dbReference type="KEGG" id="aha:AHA_3470"/>
<dbReference type="PATRIC" id="fig|380703.7.peg.3460"/>
<dbReference type="eggNOG" id="COG3076">
    <property type="taxonomic scope" value="Bacteria"/>
</dbReference>
<dbReference type="HOGENOM" id="CLU_1583088_0_0_6"/>
<dbReference type="OrthoDB" id="7065464at2"/>
<dbReference type="Proteomes" id="UP000000756">
    <property type="component" value="Chromosome"/>
</dbReference>
<dbReference type="GO" id="GO:0005737">
    <property type="term" value="C:cytoplasm"/>
    <property type="evidence" value="ECO:0007669"/>
    <property type="project" value="UniProtKB-SubCell"/>
</dbReference>
<dbReference type="GO" id="GO:0060698">
    <property type="term" value="F:endoribonuclease inhibitor activity"/>
    <property type="evidence" value="ECO:0007669"/>
    <property type="project" value="UniProtKB-UniRule"/>
</dbReference>
<dbReference type="GO" id="GO:0019899">
    <property type="term" value="F:enzyme binding"/>
    <property type="evidence" value="ECO:0007669"/>
    <property type="project" value="UniProtKB-UniRule"/>
</dbReference>
<dbReference type="Gene3D" id="3.30.70.970">
    <property type="entry name" value="RraB-like"/>
    <property type="match status" value="1"/>
</dbReference>
<dbReference type="HAMAP" id="MF_01888">
    <property type="entry name" value="RraB"/>
    <property type="match status" value="1"/>
</dbReference>
<dbReference type="InterPro" id="IPR016716">
    <property type="entry name" value="RraB"/>
</dbReference>
<dbReference type="InterPro" id="IPR036701">
    <property type="entry name" value="RraB-like_sf"/>
</dbReference>
<dbReference type="InterPro" id="IPR009671">
    <property type="entry name" value="RraB_dom"/>
</dbReference>
<dbReference type="NCBIfam" id="NF008393">
    <property type="entry name" value="PRK11191.1"/>
    <property type="match status" value="1"/>
</dbReference>
<dbReference type="Pfam" id="PF06877">
    <property type="entry name" value="RraB"/>
    <property type="match status" value="1"/>
</dbReference>
<dbReference type="PIRSF" id="PIRSF018193">
    <property type="entry name" value="UCP018193"/>
    <property type="match status" value="1"/>
</dbReference>
<dbReference type="SUPFAM" id="SSF89946">
    <property type="entry name" value="Hypothetical protein VC0424"/>
    <property type="match status" value="1"/>
</dbReference>
<keyword id="KW-0963">Cytoplasm</keyword>
<keyword id="KW-1185">Reference proteome</keyword>